<organism>
    <name type="scientific">Streptomyces griseus subsp. griseus (strain JCM 4626 / CBS 651.72 / NBRC 13350 / KCC S-0626 / ISP 5235)</name>
    <dbReference type="NCBI Taxonomy" id="455632"/>
    <lineage>
        <taxon>Bacteria</taxon>
        <taxon>Bacillati</taxon>
        <taxon>Actinomycetota</taxon>
        <taxon>Actinomycetes</taxon>
        <taxon>Kitasatosporales</taxon>
        <taxon>Streptomycetaceae</taxon>
        <taxon>Streptomyces</taxon>
    </lineage>
</organism>
<gene>
    <name evidence="1" type="primary">rnhB</name>
    <name type="ordered locus">SGR_1709</name>
</gene>
<reference key="1">
    <citation type="journal article" date="2008" name="J. Bacteriol.">
        <title>Genome sequence of the streptomycin-producing microorganism Streptomyces griseus IFO 13350.</title>
        <authorList>
            <person name="Ohnishi Y."/>
            <person name="Ishikawa J."/>
            <person name="Hara H."/>
            <person name="Suzuki H."/>
            <person name="Ikenoya M."/>
            <person name="Ikeda H."/>
            <person name="Yamashita A."/>
            <person name="Hattori M."/>
            <person name="Horinouchi S."/>
        </authorList>
    </citation>
    <scope>NUCLEOTIDE SEQUENCE [LARGE SCALE GENOMIC DNA]</scope>
    <source>
        <strain>JCM 4626 / CBS 651.72 / NBRC 13350 / KCC S-0626 / ISP 5235</strain>
    </source>
</reference>
<evidence type="ECO:0000255" key="1">
    <source>
        <dbReference type="HAMAP-Rule" id="MF_00052"/>
    </source>
</evidence>
<evidence type="ECO:0000255" key="2">
    <source>
        <dbReference type="PROSITE-ProRule" id="PRU01319"/>
    </source>
</evidence>
<keyword id="KW-0963">Cytoplasm</keyword>
<keyword id="KW-0255">Endonuclease</keyword>
<keyword id="KW-0378">Hydrolase</keyword>
<keyword id="KW-0464">Manganese</keyword>
<keyword id="KW-0479">Metal-binding</keyword>
<keyword id="KW-0540">Nuclease</keyword>
<sequence length="236" mass="25381">MPYEPPTHTVERSLRATTGARTVAGVDEVGRGAWAGPVTVCAAVTGLRRPPEGLTDSKLLTPRRRAELDPVLRSWVTAYALGDASPQEIDDLGMTAALRLAAVRALEGLPVRPDAVILDGKHDYLGVPWKVRTVIKGDQSCIAVAAASVIAKVHRDRMMAELGAASEDCADFDFGANAGYPSPVHRAALEERGPTAHHRLSWAYLDALPRWQHLKKVRFSAEAAALESGGQLGFEF</sequence>
<dbReference type="EC" id="3.1.26.4" evidence="1"/>
<dbReference type="EMBL" id="AP009493">
    <property type="protein sequence ID" value="BAG18538.1"/>
    <property type="molecule type" value="Genomic_DNA"/>
</dbReference>
<dbReference type="RefSeq" id="WP_012378725.1">
    <property type="nucleotide sequence ID" value="NC_010572.1"/>
</dbReference>
<dbReference type="SMR" id="B1VXS2"/>
<dbReference type="KEGG" id="sgr:SGR_1709"/>
<dbReference type="PATRIC" id="fig|455632.4.peg.1732"/>
<dbReference type="eggNOG" id="COG0164">
    <property type="taxonomic scope" value="Bacteria"/>
</dbReference>
<dbReference type="HOGENOM" id="CLU_036532_3_0_11"/>
<dbReference type="Proteomes" id="UP000001685">
    <property type="component" value="Chromosome"/>
</dbReference>
<dbReference type="GO" id="GO:0005737">
    <property type="term" value="C:cytoplasm"/>
    <property type="evidence" value="ECO:0007669"/>
    <property type="project" value="UniProtKB-SubCell"/>
</dbReference>
<dbReference type="GO" id="GO:0032299">
    <property type="term" value="C:ribonuclease H2 complex"/>
    <property type="evidence" value="ECO:0007669"/>
    <property type="project" value="TreeGrafter"/>
</dbReference>
<dbReference type="GO" id="GO:0030145">
    <property type="term" value="F:manganese ion binding"/>
    <property type="evidence" value="ECO:0007669"/>
    <property type="project" value="UniProtKB-UniRule"/>
</dbReference>
<dbReference type="GO" id="GO:0003723">
    <property type="term" value="F:RNA binding"/>
    <property type="evidence" value="ECO:0007669"/>
    <property type="project" value="InterPro"/>
</dbReference>
<dbReference type="GO" id="GO:0004523">
    <property type="term" value="F:RNA-DNA hybrid ribonuclease activity"/>
    <property type="evidence" value="ECO:0007669"/>
    <property type="project" value="UniProtKB-UniRule"/>
</dbReference>
<dbReference type="GO" id="GO:0043137">
    <property type="term" value="P:DNA replication, removal of RNA primer"/>
    <property type="evidence" value="ECO:0007669"/>
    <property type="project" value="TreeGrafter"/>
</dbReference>
<dbReference type="GO" id="GO:0006298">
    <property type="term" value="P:mismatch repair"/>
    <property type="evidence" value="ECO:0007669"/>
    <property type="project" value="TreeGrafter"/>
</dbReference>
<dbReference type="CDD" id="cd07182">
    <property type="entry name" value="RNase_HII_bacteria_HII_like"/>
    <property type="match status" value="1"/>
</dbReference>
<dbReference type="FunFam" id="3.30.420.10:FF:000167">
    <property type="entry name" value="Ribonuclease HII"/>
    <property type="match status" value="1"/>
</dbReference>
<dbReference type="Gene3D" id="3.30.420.10">
    <property type="entry name" value="Ribonuclease H-like superfamily/Ribonuclease H"/>
    <property type="match status" value="1"/>
</dbReference>
<dbReference type="HAMAP" id="MF_00052_B">
    <property type="entry name" value="RNase_HII_B"/>
    <property type="match status" value="1"/>
</dbReference>
<dbReference type="InterPro" id="IPR022898">
    <property type="entry name" value="RNase_HII"/>
</dbReference>
<dbReference type="InterPro" id="IPR001352">
    <property type="entry name" value="RNase_HII/HIII"/>
</dbReference>
<dbReference type="InterPro" id="IPR024567">
    <property type="entry name" value="RNase_HII/HIII_dom"/>
</dbReference>
<dbReference type="InterPro" id="IPR012337">
    <property type="entry name" value="RNaseH-like_sf"/>
</dbReference>
<dbReference type="InterPro" id="IPR036397">
    <property type="entry name" value="RNaseH_sf"/>
</dbReference>
<dbReference type="NCBIfam" id="NF000595">
    <property type="entry name" value="PRK00015.1-3"/>
    <property type="match status" value="1"/>
</dbReference>
<dbReference type="PANTHER" id="PTHR10954">
    <property type="entry name" value="RIBONUCLEASE H2 SUBUNIT A"/>
    <property type="match status" value="1"/>
</dbReference>
<dbReference type="PANTHER" id="PTHR10954:SF18">
    <property type="entry name" value="RIBONUCLEASE HII"/>
    <property type="match status" value="1"/>
</dbReference>
<dbReference type="Pfam" id="PF01351">
    <property type="entry name" value="RNase_HII"/>
    <property type="match status" value="1"/>
</dbReference>
<dbReference type="SUPFAM" id="SSF53098">
    <property type="entry name" value="Ribonuclease H-like"/>
    <property type="match status" value="1"/>
</dbReference>
<dbReference type="PROSITE" id="PS51975">
    <property type="entry name" value="RNASE_H_2"/>
    <property type="match status" value="1"/>
</dbReference>
<comment type="function">
    <text evidence="1">Endonuclease that specifically degrades the RNA of RNA-DNA hybrids.</text>
</comment>
<comment type="catalytic activity">
    <reaction evidence="1">
        <text>Endonucleolytic cleavage to 5'-phosphomonoester.</text>
        <dbReference type="EC" id="3.1.26.4"/>
    </reaction>
</comment>
<comment type="cofactor">
    <cofactor evidence="1">
        <name>Mn(2+)</name>
        <dbReference type="ChEBI" id="CHEBI:29035"/>
    </cofactor>
    <cofactor evidence="1">
        <name>Mg(2+)</name>
        <dbReference type="ChEBI" id="CHEBI:18420"/>
    </cofactor>
    <text evidence="1">Manganese or magnesium. Binds 1 divalent metal ion per monomer in the absence of substrate. May bind a second metal ion after substrate binding.</text>
</comment>
<comment type="subcellular location">
    <subcellularLocation>
        <location evidence="1">Cytoplasm</location>
    </subcellularLocation>
</comment>
<comment type="similarity">
    <text evidence="1">Belongs to the RNase HII family.</text>
</comment>
<feature type="chain" id="PRO_1000091658" description="Ribonuclease HII">
    <location>
        <begin position="1"/>
        <end position="236"/>
    </location>
</feature>
<feature type="domain" description="RNase H type-2" evidence="2">
    <location>
        <begin position="21"/>
        <end position="214"/>
    </location>
</feature>
<feature type="binding site" evidence="1">
    <location>
        <position position="27"/>
    </location>
    <ligand>
        <name>a divalent metal cation</name>
        <dbReference type="ChEBI" id="CHEBI:60240"/>
    </ligand>
</feature>
<feature type="binding site" evidence="1">
    <location>
        <position position="28"/>
    </location>
    <ligand>
        <name>a divalent metal cation</name>
        <dbReference type="ChEBI" id="CHEBI:60240"/>
    </ligand>
</feature>
<feature type="binding site" evidence="1">
    <location>
        <position position="119"/>
    </location>
    <ligand>
        <name>a divalent metal cation</name>
        <dbReference type="ChEBI" id="CHEBI:60240"/>
    </ligand>
</feature>
<name>RNH2_STRGG</name>
<proteinExistence type="inferred from homology"/>
<protein>
    <recommendedName>
        <fullName evidence="1">Ribonuclease HII</fullName>
        <shortName evidence="1">RNase HII</shortName>
        <ecNumber evidence="1">3.1.26.4</ecNumber>
    </recommendedName>
</protein>
<accession>B1VXS2</accession>